<reference key="1">
    <citation type="journal article" date="2006" name="J. Bacteriol.">
        <title>Complete genome sequence of Yersinia pestis strains Antiqua and Nepal516: evidence of gene reduction in an emerging pathogen.</title>
        <authorList>
            <person name="Chain P.S.G."/>
            <person name="Hu P."/>
            <person name="Malfatti S.A."/>
            <person name="Radnedge L."/>
            <person name="Larimer F."/>
            <person name="Vergez L.M."/>
            <person name="Worsham P."/>
            <person name="Chu M.C."/>
            <person name="Andersen G.L."/>
        </authorList>
    </citation>
    <scope>NUCLEOTIDE SEQUENCE [LARGE SCALE GENOMIC DNA]</scope>
    <source>
        <strain>Nepal516</strain>
    </source>
</reference>
<reference key="2">
    <citation type="submission" date="2009-04" db="EMBL/GenBank/DDBJ databases">
        <title>Yersinia pestis Nepal516A whole genome shotgun sequencing project.</title>
        <authorList>
            <person name="Plunkett G. III"/>
            <person name="Anderson B.D."/>
            <person name="Baumler D.J."/>
            <person name="Burland V."/>
            <person name="Cabot E.L."/>
            <person name="Glasner J.D."/>
            <person name="Mau B."/>
            <person name="Neeno-Eckwall E."/>
            <person name="Perna N.T."/>
            <person name="Munk A.C."/>
            <person name="Tapia R."/>
            <person name="Green L.D."/>
            <person name="Rogers Y.C."/>
            <person name="Detter J.C."/>
            <person name="Bruce D.C."/>
            <person name="Brettin T.S."/>
        </authorList>
    </citation>
    <scope>NUCLEOTIDE SEQUENCE [LARGE SCALE GENOMIC DNA]</scope>
    <source>
        <strain>Nepal516</strain>
    </source>
</reference>
<dbReference type="EMBL" id="CP000305">
    <property type="protein sequence ID" value="ABG17942.1"/>
    <property type="molecule type" value="Genomic_DNA"/>
</dbReference>
<dbReference type="EMBL" id="ACNQ01000009">
    <property type="protein sequence ID" value="EEO77060.1"/>
    <property type="molecule type" value="Genomic_DNA"/>
</dbReference>
<dbReference type="RefSeq" id="WP_002211688.1">
    <property type="nucleotide sequence ID" value="NZ_ACNQ01000009.1"/>
</dbReference>
<dbReference type="SMR" id="Q1CJ88"/>
<dbReference type="GeneID" id="96665563"/>
<dbReference type="KEGG" id="ypn:YPN_1612"/>
<dbReference type="HOGENOM" id="CLU_017584_9_4_6"/>
<dbReference type="Proteomes" id="UP000008936">
    <property type="component" value="Chromosome"/>
</dbReference>
<dbReference type="GO" id="GO:0005737">
    <property type="term" value="C:cytoplasm"/>
    <property type="evidence" value="ECO:0007669"/>
    <property type="project" value="UniProtKB-SubCell"/>
</dbReference>
<dbReference type="GO" id="GO:0003677">
    <property type="term" value="F:DNA binding"/>
    <property type="evidence" value="ECO:0007669"/>
    <property type="project" value="UniProtKB-KW"/>
</dbReference>
<dbReference type="GO" id="GO:0003700">
    <property type="term" value="F:DNA-binding transcription factor activity"/>
    <property type="evidence" value="ECO:0007669"/>
    <property type="project" value="UniProtKB-UniRule"/>
</dbReference>
<dbReference type="GO" id="GO:0000062">
    <property type="term" value="F:fatty-acyl-CoA binding"/>
    <property type="evidence" value="ECO:0007669"/>
    <property type="project" value="InterPro"/>
</dbReference>
<dbReference type="GO" id="GO:0006631">
    <property type="term" value="P:fatty acid metabolic process"/>
    <property type="evidence" value="ECO:0007669"/>
    <property type="project" value="UniProtKB-KW"/>
</dbReference>
<dbReference type="GO" id="GO:0019217">
    <property type="term" value="P:regulation of fatty acid metabolic process"/>
    <property type="evidence" value="ECO:0007669"/>
    <property type="project" value="UniProtKB-UniRule"/>
</dbReference>
<dbReference type="CDD" id="cd07377">
    <property type="entry name" value="WHTH_GntR"/>
    <property type="match status" value="1"/>
</dbReference>
<dbReference type="FunFam" id="1.10.10.10:FF:000036">
    <property type="entry name" value="Fatty acid metabolism regulator protein"/>
    <property type="match status" value="1"/>
</dbReference>
<dbReference type="Gene3D" id="1.20.120.530">
    <property type="entry name" value="GntR ligand-binding domain-like"/>
    <property type="match status" value="1"/>
</dbReference>
<dbReference type="Gene3D" id="1.10.10.10">
    <property type="entry name" value="Winged helix-like DNA-binding domain superfamily/Winged helix DNA-binding domain"/>
    <property type="match status" value="1"/>
</dbReference>
<dbReference type="HAMAP" id="MF_00696">
    <property type="entry name" value="HTH_FadR"/>
    <property type="match status" value="1"/>
</dbReference>
<dbReference type="InterPro" id="IPR014178">
    <property type="entry name" value="FA-response_TF_FadR"/>
</dbReference>
<dbReference type="InterPro" id="IPR028374">
    <property type="entry name" value="FadR_C"/>
</dbReference>
<dbReference type="InterPro" id="IPR008920">
    <property type="entry name" value="TF_FadR/GntR_C"/>
</dbReference>
<dbReference type="InterPro" id="IPR000524">
    <property type="entry name" value="Tscrpt_reg_HTH_GntR"/>
</dbReference>
<dbReference type="InterPro" id="IPR036388">
    <property type="entry name" value="WH-like_DNA-bd_sf"/>
</dbReference>
<dbReference type="InterPro" id="IPR036390">
    <property type="entry name" value="WH_DNA-bd_sf"/>
</dbReference>
<dbReference type="NCBIfam" id="TIGR02812">
    <property type="entry name" value="fadR_gamma"/>
    <property type="match status" value="1"/>
</dbReference>
<dbReference type="NCBIfam" id="NF003444">
    <property type="entry name" value="PRK04984.1"/>
    <property type="match status" value="1"/>
</dbReference>
<dbReference type="PANTHER" id="PTHR43537:SF52">
    <property type="entry name" value="FATTY ACID METABOLISM REGULATOR PROTEIN"/>
    <property type="match status" value="1"/>
</dbReference>
<dbReference type="PANTHER" id="PTHR43537">
    <property type="entry name" value="TRANSCRIPTIONAL REGULATOR, GNTR FAMILY"/>
    <property type="match status" value="1"/>
</dbReference>
<dbReference type="Pfam" id="PF07840">
    <property type="entry name" value="FadR_C"/>
    <property type="match status" value="1"/>
</dbReference>
<dbReference type="Pfam" id="PF00392">
    <property type="entry name" value="GntR"/>
    <property type="match status" value="1"/>
</dbReference>
<dbReference type="PRINTS" id="PR00035">
    <property type="entry name" value="HTHGNTR"/>
</dbReference>
<dbReference type="SMART" id="SM00345">
    <property type="entry name" value="HTH_GNTR"/>
    <property type="match status" value="1"/>
</dbReference>
<dbReference type="SUPFAM" id="SSF48008">
    <property type="entry name" value="GntR ligand-binding domain-like"/>
    <property type="match status" value="1"/>
</dbReference>
<dbReference type="SUPFAM" id="SSF46785">
    <property type="entry name" value="Winged helix' DNA-binding domain"/>
    <property type="match status" value="1"/>
</dbReference>
<dbReference type="PROSITE" id="PS50949">
    <property type="entry name" value="HTH_GNTR"/>
    <property type="match status" value="1"/>
</dbReference>
<proteinExistence type="inferred from homology"/>
<accession>Q1CJ88</accession>
<accession>C4GSQ0</accession>
<organism>
    <name type="scientific">Yersinia pestis bv. Antiqua (strain Nepal516)</name>
    <dbReference type="NCBI Taxonomy" id="377628"/>
    <lineage>
        <taxon>Bacteria</taxon>
        <taxon>Pseudomonadati</taxon>
        <taxon>Pseudomonadota</taxon>
        <taxon>Gammaproteobacteria</taxon>
        <taxon>Enterobacterales</taxon>
        <taxon>Yersiniaceae</taxon>
        <taxon>Yersinia</taxon>
    </lineage>
</organism>
<name>FADR_YERPN</name>
<keyword id="KW-0010">Activator</keyword>
<keyword id="KW-0963">Cytoplasm</keyword>
<keyword id="KW-0238">DNA-binding</keyword>
<keyword id="KW-0276">Fatty acid metabolism</keyword>
<keyword id="KW-0443">Lipid metabolism</keyword>
<keyword id="KW-0678">Repressor</keyword>
<keyword id="KW-0804">Transcription</keyword>
<keyword id="KW-0805">Transcription regulation</keyword>
<feature type="chain" id="PRO_0000301519" description="Fatty acid metabolism regulator protein">
    <location>
        <begin position="1"/>
        <end position="239"/>
    </location>
</feature>
<feature type="domain" description="HTH gntR-type" evidence="1">
    <location>
        <begin position="6"/>
        <end position="74"/>
    </location>
</feature>
<feature type="DNA-binding region" description="H-T-H motif" evidence="1">
    <location>
        <begin position="34"/>
        <end position="53"/>
    </location>
</feature>
<comment type="function">
    <text evidence="1">Multifunctional regulator of fatty acid metabolism.</text>
</comment>
<comment type="subunit">
    <text evidence="1">Homodimer.</text>
</comment>
<comment type="subcellular location">
    <subcellularLocation>
        <location evidence="1">Cytoplasm</location>
    </subcellularLocation>
</comment>
<evidence type="ECO:0000255" key="1">
    <source>
        <dbReference type="HAMAP-Rule" id="MF_00696"/>
    </source>
</evidence>
<gene>
    <name evidence="1" type="primary">fadR</name>
    <name type="ordered locus">YPN_1612</name>
    <name type="ORF">YP516_1794</name>
</gene>
<protein>
    <recommendedName>
        <fullName evidence="1">Fatty acid metabolism regulator protein</fullName>
    </recommendedName>
</protein>
<sequence>MVIKAQSPAGFAEEYIIESIWNNRFPPGSILPAERELSELIGVTRTTLREVLQRLARDGWLTIQHGKPTKVNNFWETSGLNILETLARLDHDSVPQLIDNLLAVRTNIATIFVRTAIRHHPEKAQEILARAKTVDDNAEAFTALDYGIFRGLAFASGNPIYGLILNGLKGLYTRVGRYYFSNPEARKLALTFYNKLSTLCDTESYDQVLECLRTYGKESGAIWHSMQGTMPSDLAEARR</sequence>